<reference key="1">
    <citation type="journal article" date="2005" name="Proc. Natl. Acad. Sci. U.S.A.">
        <title>The genome of Salinibacter ruber: convergence and gene exchange among hyperhalophilic bacteria and archaea.</title>
        <authorList>
            <person name="Mongodin E.F."/>
            <person name="Nelson K.E."/>
            <person name="Daugherty S."/>
            <person name="DeBoy R.T."/>
            <person name="Wister J."/>
            <person name="Khouri H."/>
            <person name="Weidman J."/>
            <person name="Walsh D.A."/>
            <person name="Papke R.T."/>
            <person name="Sanchez Perez G."/>
            <person name="Sharma A.K."/>
            <person name="Nesbo C.L."/>
            <person name="MacLeod D."/>
            <person name="Bapteste E."/>
            <person name="Doolittle W.F."/>
            <person name="Charlebois R.L."/>
            <person name="Legault B."/>
            <person name="Rodriguez-Valera F."/>
        </authorList>
    </citation>
    <scope>NUCLEOTIDE SEQUENCE [LARGE SCALE GENOMIC DNA]</scope>
    <source>
        <strain>DSM 13855 / CECT 5946 / M31</strain>
    </source>
</reference>
<feature type="chain" id="PRO_0000265058" description="Putative 3-methyladenine DNA glycosylase">
    <location>
        <begin position="1"/>
        <end position="206"/>
    </location>
</feature>
<protein>
    <recommendedName>
        <fullName evidence="1">Putative 3-methyladenine DNA glycosylase</fullName>
        <ecNumber evidence="1">3.2.2.-</ecNumber>
    </recommendedName>
</protein>
<evidence type="ECO:0000255" key="1">
    <source>
        <dbReference type="HAMAP-Rule" id="MF_00527"/>
    </source>
</evidence>
<proteinExistence type="inferred from homology"/>
<name>3MGH_SALRD</name>
<gene>
    <name type="ordered locus">SRU_1545</name>
</gene>
<dbReference type="EC" id="3.2.2.-" evidence="1"/>
<dbReference type="EMBL" id="CP000159">
    <property type="protein sequence ID" value="ABC44247.1"/>
    <property type="molecule type" value="Genomic_DNA"/>
</dbReference>
<dbReference type="RefSeq" id="WP_011404292.1">
    <property type="nucleotide sequence ID" value="NC_007677.1"/>
</dbReference>
<dbReference type="RefSeq" id="YP_445666.1">
    <property type="nucleotide sequence ID" value="NC_007677.1"/>
</dbReference>
<dbReference type="SMR" id="Q2S2B5"/>
<dbReference type="STRING" id="309807.SRU_1545"/>
<dbReference type="EnsemblBacteria" id="ABC44247">
    <property type="protein sequence ID" value="ABC44247"/>
    <property type="gene ID" value="SRU_1545"/>
</dbReference>
<dbReference type="KEGG" id="sru:SRU_1545"/>
<dbReference type="PATRIC" id="fig|309807.25.peg.1599"/>
<dbReference type="eggNOG" id="COG2094">
    <property type="taxonomic scope" value="Bacteria"/>
</dbReference>
<dbReference type="HOGENOM" id="CLU_060471_4_1_10"/>
<dbReference type="OrthoDB" id="9794313at2"/>
<dbReference type="Proteomes" id="UP000008674">
    <property type="component" value="Chromosome"/>
</dbReference>
<dbReference type="GO" id="GO:0003905">
    <property type="term" value="F:alkylbase DNA N-glycosylase activity"/>
    <property type="evidence" value="ECO:0007669"/>
    <property type="project" value="InterPro"/>
</dbReference>
<dbReference type="GO" id="GO:0003677">
    <property type="term" value="F:DNA binding"/>
    <property type="evidence" value="ECO:0007669"/>
    <property type="project" value="InterPro"/>
</dbReference>
<dbReference type="GO" id="GO:0006284">
    <property type="term" value="P:base-excision repair"/>
    <property type="evidence" value="ECO:0007669"/>
    <property type="project" value="InterPro"/>
</dbReference>
<dbReference type="CDD" id="cd00540">
    <property type="entry name" value="AAG"/>
    <property type="match status" value="1"/>
</dbReference>
<dbReference type="FunFam" id="3.10.300.10:FF:000001">
    <property type="entry name" value="Putative 3-methyladenine DNA glycosylase"/>
    <property type="match status" value="1"/>
</dbReference>
<dbReference type="Gene3D" id="3.10.300.10">
    <property type="entry name" value="Methylpurine-DNA glycosylase (MPG)"/>
    <property type="match status" value="1"/>
</dbReference>
<dbReference type="HAMAP" id="MF_00527">
    <property type="entry name" value="3MGH"/>
    <property type="match status" value="1"/>
</dbReference>
<dbReference type="InterPro" id="IPR011034">
    <property type="entry name" value="Formyl_transferase-like_C_sf"/>
</dbReference>
<dbReference type="InterPro" id="IPR003180">
    <property type="entry name" value="MPG"/>
</dbReference>
<dbReference type="InterPro" id="IPR036995">
    <property type="entry name" value="MPG_sf"/>
</dbReference>
<dbReference type="NCBIfam" id="TIGR00567">
    <property type="entry name" value="3mg"/>
    <property type="match status" value="1"/>
</dbReference>
<dbReference type="PANTHER" id="PTHR10429">
    <property type="entry name" value="DNA-3-METHYLADENINE GLYCOSYLASE"/>
    <property type="match status" value="1"/>
</dbReference>
<dbReference type="PANTHER" id="PTHR10429:SF0">
    <property type="entry name" value="DNA-3-METHYLADENINE GLYCOSYLASE"/>
    <property type="match status" value="1"/>
</dbReference>
<dbReference type="Pfam" id="PF02245">
    <property type="entry name" value="Pur_DNA_glyco"/>
    <property type="match status" value="1"/>
</dbReference>
<dbReference type="SUPFAM" id="SSF50486">
    <property type="entry name" value="FMT C-terminal domain-like"/>
    <property type="match status" value="1"/>
</dbReference>
<accession>Q2S2B5</accession>
<sequence length="206" mass="22404">MEPLPASFFNRPTVSVARDLLGARLVHEAPTGTRLVGRIVETEAYTEDDPACHASHLSRDPETGEVVGQGRGQDLFAAPGTAYVYLIYGVHWLLNVVTEPEGTAGAVLVRAVEPEEGLQDMRTERGVDRRVDLTNGPGKLAEAFGIDGEFHQTRLTARPLFFADGDSVDDEQVARSSRIGISKGVERSWRWYVAANRFVSPASPSG</sequence>
<comment type="similarity">
    <text evidence="1">Belongs to the DNA glycosylase MPG family.</text>
</comment>
<keyword id="KW-0227">DNA damage</keyword>
<keyword id="KW-0234">DNA repair</keyword>
<keyword id="KW-0378">Hydrolase</keyword>
<keyword id="KW-1185">Reference proteome</keyword>
<organism>
    <name type="scientific">Salinibacter ruber (strain DSM 13855 / M31)</name>
    <dbReference type="NCBI Taxonomy" id="309807"/>
    <lineage>
        <taxon>Bacteria</taxon>
        <taxon>Pseudomonadati</taxon>
        <taxon>Rhodothermota</taxon>
        <taxon>Rhodothermia</taxon>
        <taxon>Rhodothermales</taxon>
        <taxon>Salinibacteraceae</taxon>
        <taxon>Salinibacter</taxon>
    </lineage>
</organism>